<proteinExistence type="evidence at protein level"/>
<keyword id="KW-0903">Direct protein sequencing</keyword>
<keyword id="KW-0964">Secreted</keyword>
<keyword id="KW-0732">Signal</keyword>
<evidence type="ECO:0000255" key="1"/>
<evidence type="ECO:0000256" key="2">
    <source>
        <dbReference type="SAM" id="MobiDB-lite"/>
    </source>
</evidence>
<evidence type="ECO:0000269" key="3">
    <source>
    </source>
</evidence>
<evidence type="ECO:0000269" key="4">
    <source ref="1"/>
</evidence>
<evidence type="ECO:0000305" key="5"/>
<comment type="subcellular location">
    <subcellularLocation>
        <location evidence="3">Secreted</location>
    </subcellularLocation>
</comment>
<comment type="tissue specificity">
    <text evidence="3">Component of the acid-insoluble organic matrix of calcified layers of the shell (at protein level).</text>
</comment>
<comment type="similarity">
    <text evidence="1">In the C-terminal section; belongs to the glycosyl hydrolase 23 family.</text>
</comment>
<accession>B3A0P5</accession>
<feature type="signal peptide" evidence="1">
    <location>
        <begin position="1"/>
        <end position="16"/>
    </location>
</feature>
<feature type="chain" id="PRO_0000415246" description="Glycine, glutamate and proline-rich protein" evidence="1">
    <location>
        <begin position="17"/>
        <end position="419"/>
    </location>
</feature>
<feature type="region of interest" description="Disordered" evidence="2">
    <location>
        <begin position="74"/>
        <end position="152"/>
    </location>
</feature>
<feature type="compositionally biased region" description="Acidic residues" evidence="2">
    <location>
        <begin position="76"/>
        <end position="85"/>
    </location>
</feature>
<feature type="compositionally biased region" description="Basic and acidic residues" evidence="2">
    <location>
        <begin position="86"/>
        <end position="130"/>
    </location>
</feature>
<protein>
    <recommendedName>
        <fullName>Glycine, glutamate and proline-rich protein</fullName>
    </recommendedName>
</protein>
<dbReference type="EMBL" id="FC622269">
    <property type="status" value="NOT_ANNOTATED_CDS"/>
    <property type="molecule type" value="mRNA"/>
</dbReference>
<dbReference type="EMBL" id="FC626005">
    <property type="status" value="NOT_ANNOTATED_CDS"/>
    <property type="molecule type" value="mRNA"/>
</dbReference>
<dbReference type="SMR" id="B3A0P5"/>
<dbReference type="GO" id="GO:0005576">
    <property type="term" value="C:extracellular region"/>
    <property type="evidence" value="ECO:0007669"/>
    <property type="project" value="UniProtKB-SubCell"/>
</dbReference>
<dbReference type="GO" id="GO:0003796">
    <property type="term" value="F:lysozyme activity"/>
    <property type="evidence" value="ECO:0007669"/>
    <property type="project" value="InterPro"/>
</dbReference>
<dbReference type="GO" id="GO:0009253">
    <property type="term" value="P:peptidoglycan catabolic process"/>
    <property type="evidence" value="ECO:0007669"/>
    <property type="project" value="InterPro"/>
</dbReference>
<dbReference type="CDD" id="cd01021">
    <property type="entry name" value="GEWL"/>
    <property type="match status" value="1"/>
</dbReference>
<dbReference type="Gene3D" id="1.10.530.10">
    <property type="match status" value="1"/>
</dbReference>
<dbReference type="InterPro" id="IPR002152">
    <property type="entry name" value="Glyco_hydro_23"/>
</dbReference>
<dbReference type="InterPro" id="IPR023346">
    <property type="entry name" value="Lysozyme-like_dom_sf"/>
</dbReference>
<dbReference type="PANTHER" id="PTHR31698">
    <property type="entry name" value="LYSOZYME G FAMILY MEMBER"/>
    <property type="match status" value="1"/>
</dbReference>
<dbReference type="PANTHER" id="PTHR31698:SF8">
    <property type="entry name" value="LYSOZYME G-RELATED"/>
    <property type="match status" value="1"/>
</dbReference>
<dbReference type="PRINTS" id="PR00749">
    <property type="entry name" value="LYSOZYMEG"/>
</dbReference>
<dbReference type="SUPFAM" id="SSF53955">
    <property type="entry name" value="Lysozyme-like"/>
    <property type="match status" value="1"/>
</dbReference>
<organism>
    <name type="scientific">Lottia gigantea</name>
    <name type="common">Giant owl limpet</name>
    <dbReference type="NCBI Taxonomy" id="225164"/>
    <lineage>
        <taxon>Eukaryota</taxon>
        <taxon>Metazoa</taxon>
        <taxon>Spiralia</taxon>
        <taxon>Lophotrochozoa</taxon>
        <taxon>Mollusca</taxon>
        <taxon>Gastropoda</taxon>
        <taxon>Patellogastropoda</taxon>
        <taxon>Lottioidea</taxon>
        <taxon>Lottiidae</taxon>
        <taxon>Lottia</taxon>
    </lineage>
</organism>
<sequence>MKCLVALFLSLSLVACQYDDYDTERKNNNMLSSMNILDLLDSFGLNIKARIAHVRRVAGRIRLTLDIGLGNGDVERESEEAEGEGTDGRGGGEGEREGWGGEREGGEGEREGGEGEREGREGEREGKSSESNESPEDFIGPPVDMCAGESRRGSPSIGCIAAECCQHSFYINSLCPGSSVCCFSMDVCDRLPVPVIPPFPTDPGTLPPPPPIPDSQTTVSPNQPSSYMCHGDFMKLMPKGADQRTARQDNLAYAGVRASNKLVDNDLAELNKRKDCYVQAGKNHCIHPAVIAAIASRETRGGKLLYSTNGYGDGGRAYGIMQCDGGASGLGDICKKYPWDSCEHINQLTDIILLNYVNQMKTKHPSWPAHYQLKGGVSAYNAGVGNVQTIAGMDAGTTNDDYSNDVIARAQRLVNAHGW</sequence>
<reference evidence="5" key="1">
    <citation type="submission" date="2007-12" db="EMBL/GenBank/DDBJ databases">
        <title>DOE Joint Genome Institute Lottia gigantea EST project.</title>
        <authorList>
            <person name="Richardson P."/>
            <person name="Lucas S."/>
            <person name="Rokhsar D."/>
            <person name="Wang M."/>
            <person name="Lindquist E.A."/>
        </authorList>
    </citation>
    <scope>NUCLEOTIDE SEQUENCE [LARGE SCALE MRNA]</scope>
    <scope>IDENTIFICATION</scope>
    <source>
        <tissue evidence="4">Mantle</tissue>
    </source>
</reference>
<reference key="2">
    <citation type="journal article" date="2013" name="FEBS J.">
        <title>The shell-forming proteome of Lottia gigantea reveals both deep conservations and lineage-specific novelties.</title>
        <authorList>
            <person name="Marie B."/>
            <person name="Jackson D.J."/>
            <person name="Ramos-Silva P."/>
            <person name="Zanella-Cleon I."/>
            <person name="Guichard N."/>
            <person name="Marin F."/>
        </authorList>
    </citation>
    <scope>PROTEIN SEQUENCE OF 26-48; 104-120; 245-257; 262-297 AND 304-409</scope>
    <scope>SUBCELLULAR LOCATION</scope>
    <scope>TISSUE SPECIFICITY</scope>
    <source>
        <tissue>Shell</tissue>
    </source>
</reference>
<name>GEPRP_LOTGI</name>